<protein>
    <recommendedName>
        <fullName>Putative purine permease 15</fullName>
        <shortName>AtPUP15</shortName>
    </recommendedName>
</protein>
<sequence length="387" mass="43940">MGHNQPMQSSNPQEHFVQIALDIEHRLTTPISLTSDSNQRRNQWVTIIICTILAVTGQCIARLLENYYFLHKNLSRRRGILTQTLLQVVGFPILLLPFLLHFLIKKQKQLLIFSGETSLKHLAITYSILCIYMFCQAFFSDVRNQIPYRVFTLTYTTQLLFTLIFSKYYNDIKFNRWTFISLILAVLAGAFTLYTFSAGSPIYGKKSYGYGIINVAFGAAIFFSLLLCIIRKVFEELISFCNTSTNRKQPSFVVVLEMIIFLSLVVTIILVAAVLISGEHHDMKKEMETFTKGDIAYVRTMVGQAVAWQIYWVGIVGLVFAVSAVFSNVISVCTWPIVSLLVAFLYNTHDHFDVFRGIALGAAALSVSCYIYIIHKEKSDDDDQSTS</sequence>
<comment type="subcellular location">
    <subcellularLocation>
        <location evidence="2">Membrane</location>
        <topology evidence="2">Multi-pass membrane protein</topology>
    </subcellularLocation>
</comment>
<comment type="similarity">
    <text evidence="2">Belongs to the purine permeases (TC 2.A.7.14) family.</text>
</comment>
<accession>Q9LQZ0</accession>
<accession>F4HZ42</accession>
<gene>
    <name type="primary">PUP15</name>
    <name type="ordered locus">At1g75470</name>
    <name type="ORF">F10A5.31</name>
    <name type="ORF">F1B16.15</name>
</gene>
<proteinExistence type="inferred from homology"/>
<organism>
    <name type="scientific">Arabidopsis thaliana</name>
    <name type="common">Mouse-ear cress</name>
    <dbReference type="NCBI Taxonomy" id="3702"/>
    <lineage>
        <taxon>Eukaryota</taxon>
        <taxon>Viridiplantae</taxon>
        <taxon>Streptophyta</taxon>
        <taxon>Embryophyta</taxon>
        <taxon>Tracheophyta</taxon>
        <taxon>Spermatophyta</taxon>
        <taxon>Magnoliopsida</taxon>
        <taxon>eudicotyledons</taxon>
        <taxon>Gunneridae</taxon>
        <taxon>Pentapetalae</taxon>
        <taxon>rosids</taxon>
        <taxon>malvids</taxon>
        <taxon>Brassicales</taxon>
        <taxon>Brassicaceae</taxon>
        <taxon>Camelineae</taxon>
        <taxon>Arabidopsis</taxon>
    </lineage>
</organism>
<evidence type="ECO:0000255" key="1"/>
<evidence type="ECO:0000305" key="2"/>
<feature type="chain" id="PRO_0000317402" description="Putative purine permease 15">
    <location>
        <begin position="1"/>
        <end position="387"/>
    </location>
</feature>
<feature type="transmembrane region" description="Helical" evidence="1">
    <location>
        <begin position="44"/>
        <end position="64"/>
    </location>
</feature>
<feature type="transmembrane region" description="Helical" evidence="1">
    <location>
        <begin position="84"/>
        <end position="104"/>
    </location>
</feature>
<feature type="transmembrane region" description="Helical" evidence="1">
    <location>
        <begin position="122"/>
        <end position="142"/>
    </location>
</feature>
<feature type="transmembrane region" description="Helical" evidence="1">
    <location>
        <begin position="150"/>
        <end position="169"/>
    </location>
</feature>
<feature type="transmembrane region" description="Helical" evidence="1">
    <location>
        <begin position="179"/>
        <end position="199"/>
    </location>
</feature>
<feature type="transmembrane region" description="Helical" evidence="1">
    <location>
        <begin position="210"/>
        <end position="230"/>
    </location>
</feature>
<feature type="transmembrane region" description="Helical" evidence="1">
    <location>
        <begin position="252"/>
        <end position="272"/>
    </location>
</feature>
<feature type="transmembrane region" description="Helical" evidence="1">
    <location>
        <begin position="306"/>
        <end position="326"/>
    </location>
</feature>
<feature type="transmembrane region" description="Helical" evidence="1">
    <location>
        <begin position="329"/>
        <end position="349"/>
    </location>
</feature>
<feature type="transmembrane region" description="Helical" evidence="1">
    <location>
        <begin position="354"/>
        <end position="374"/>
    </location>
</feature>
<name>PUP15_ARATH</name>
<dbReference type="EMBL" id="AC006434">
    <property type="protein sequence ID" value="AAF87123.1"/>
    <property type="molecule type" value="Genomic_DNA"/>
</dbReference>
<dbReference type="EMBL" id="CP002684">
    <property type="protein sequence ID" value="AEE35724.2"/>
    <property type="molecule type" value="Genomic_DNA"/>
</dbReference>
<dbReference type="RefSeq" id="NP_177680.2">
    <property type="nucleotide sequence ID" value="NM_106201.2"/>
</dbReference>
<dbReference type="STRING" id="3702.Q9LQZ0"/>
<dbReference type="TCDB" id="2.A.7.14.5">
    <property type="family name" value="the drug/metabolite transporter (dmt) superfamily"/>
</dbReference>
<dbReference type="PaxDb" id="3702-AT1G75470.1"/>
<dbReference type="EnsemblPlants" id="AT1G75470.1">
    <property type="protein sequence ID" value="AT1G75470.1"/>
    <property type="gene ID" value="AT1G75470"/>
</dbReference>
<dbReference type="GeneID" id="843883"/>
<dbReference type="Gramene" id="AT1G75470.1">
    <property type="protein sequence ID" value="AT1G75470.1"/>
    <property type="gene ID" value="AT1G75470"/>
</dbReference>
<dbReference type="KEGG" id="ath:AT1G75470"/>
<dbReference type="Araport" id="AT1G75470"/>
<dbReference type="TAIR" id="AT1G75470">
    <property type="gene designation" value="PUP15"/>
</dbReference>
<dbReference type="eggNOG" id="ENOG502QVMQ">
    <property type="taxonomic scope" value="Eukaryota"/>
</dbReference>
<dbReference type="HOGENOM" id="CLU_043459_2_1_1"/>
<dbReference type="InParanoid" id="Q9LQZ0"/>
<dbReference type="OMA" id="VTIIICT"/>
<dbReference type="PhylomeDB" id="Q9LQZ0"/>
<dbReference type="PRO" id="PR:Q9LQZ0"/>
<dbReference type="Proteomes" id="UP000006548">
    <property type="component" value="Chromosome 1"/>
</dbReference>
<dbReference type="ExpressionAtlas" id="Q9LQZ0">
    <property type="expression patterns" value="differential"/>
</dbReference>
<dbReference type="GO" id="GO:0016020">
    <property type="term" value="C:membrane"/>
    <property type="evidence" value="ECO:0007669"/>
    <property type="project" value="UniProtKB-SubCell"/>
</dbReference>
<dbReference type="GO" id="GO:0005345">
    <property type="term" value="F:purine nucleobase transmembrane transporter activity"/>
    <property type="evidence" value="ECO:0007669"/>
    <property type="project" value="UniProtKB-ARBA"/>
</dbReference>
<dbReference type="GO" id="GO:0015211">
    <property type="term" value="F:purine nucleoside transmembrane transporter activity"/>
    <property type="evidence" value="ECO:0007669"/>
    <property type="project" value="InterPro"/>
</dbReference>
<dbReference type="InterPro" id="IPR030182">
    <property type="entry name" value="PUP_plant"/>
</dbReference>
<dbReference type="PANTHER" id="PTHR31376">
    <property type="entry name" value="OS09G0467300 PROTEIN-RELATED"/>
    <property type="match status" value="1"/>
</dbReference>
<dbReference type="PANTHER" id="PTHR31376:SF62">
    <property type="entry name" value="PURINE PERMEASE 14-RELATED"/>
    <property type="match status" value="1"/>
</dbReference>
<dbReference type="Pfam" id="PF16913">
    <property type="entry name" value="PUNUT"/>
    <property type="match status" value="1"/>
</dbReference>
<reference key="1">
    <citation type="journal article" date="2000" name="Nature">
        <title>Sequence and analysis of chromosome 1 of the plant Arabidopsis thaliana.</title>
        <authorList>
            <person name="Theologis A."/>
            <person name="Ecker J.R."/>
            <person name="Palm C.J."/>
            <person name="Federspiel N.A."/>
            <person name="Kaul S."/>
            <person name="White O."/>
            <person name="Alonso J."/>
            <person name="Altafi H."/>
            <person name="Araujo R."/>
            <person name="Bowman C.L."/>
            <person name="Brooks S.Y."/>
            <person name="Buehler E."/>
            <person name="Chan A."/>
            <person name="Chao Q."/>
            <person name="Chen H."/>
            <person name="Cheuk R.F."/>
            <person name="Chin C.W."/>
            <person name="Chung M.K."/>
            <person name="Conn L."/>
            <person name="Conway A.B."/>
            <person name="Conway A.R."/>
            <person name="Creasy T.H."/>
            <person name="Dewar K."/>
            <person name="Dunn P."/>
            <person name="Etgu P."/>
            <person name="Feldblyum T.V."/>
            <person name="Feng J.-D."/>
            <person name="Fong B."/>
            <person name="Fujii C.Y."/>
            <person name="Gill J.E."/>
            <person name="Goldsmith A.D."/>
            <person name="Haas B."/>
            <person name="Hansen N.F."/>
            <person name="Hughes B."/>
            <person name="Huizar L."/>
            <person name="Hunter J.L."/>
            <person name="Jenkins J."/>
            <person name="Johnson-Hopson C."/>
            <person name="Khan S."/>
            <person name="Khaykin E."/>
            <person name="Kim C.J."/>
            <person name="Koo H.L."/>
            <person name="Kremenetskaia I."/>
            <person name="Kurtz D.B."/>
            <person name="Kwan A."/>
            <person name="Lam B."/>
            <person name="Langin-Hooper S."/>
            <person name="Lee A."/>
            <person name="Lee J.M."/>
            <person name="Lenz C.A."/>
            <person name="Li J.H."/>
            <person name="Li Y.-P."/>
            <person name="Lin X."/>
            <person name="Liu S.X."/>
            <person name="Liu Z.A."/>
            <person name="Luros J.S."/>
            <person name="Maiti R."/>
            <person name="Marziali A."/>
            <person name="Militscher J."/>
            <person name="Miranda M."/>
            <person name="Nguyen M."/>
            <person name="Nierman W.C."/>
            <person name="Osborne B.I."/>
            <person name="Pai G."/>
            <person name="Peterson J."/>
            <person name="Pham P.K."/>
            <person name="Rizzo M."/>
            <person name="Rooney T."/>
            <person name="Rowley D."/>
            <person name="Sakano H."/>
            <person name="Salzberg S.L."/>
            <person name="Schwartz J.R."/>
            <person name="Shinn P."/>
            <person name="Southwick A.M."/>
            <person name="Sun H."/>
            <person name="Tallon L.J."/>
            <person name="Tambunga G."/>
            <person name="Toriumi M.J."/>
            <person name="Town C.D."/>
            <person name="Utterback T."/>
            <person name="Van Aken S."/>
            <person name="Vaysberg M."/>
            <person name="Vysotskaia V.S."/>
            <person name="Walker M."/>
            <person name="Wu D."/>
            <person name="Yu G."/>
            <person name="Fraser C.M."/>
            <person name="Venter J.C."/>
            <person name="Davis R.W."/>
        </authorList>
    </citation>
    <scope>NUCLEOTIDE SEQUENCE [LARGE SCALE GENOMIC DNA]</scope>
    <source>
        <strain>cv. Columbia</strain>
    </source>
</reference>
<reference key="2">
    <citation type="journal article" date="2017" name="Plant J.">
        <title>Araport11: a complete reannotation of the Arabidopsis thaliana reference genome.</title>
        <authorList>
            <person name="Cheng C.Y."/>
            <person name="Krishnakumar V."/>
            <person name="Chan A.P."/>
            <person name="Thibaud-Nissen F."/>
            <person name="Schobel S."/>
            <person name="Town C.D."/>
        </authorList>
    </citation>
    <scope>GENOME REANNOTATION</scope>
    <source>
        <strain>cv. Columbia</strain>
    </source>
</reference>
<reference key="3">
    <citation type="journal article" date="2000" name="Plant Cell">
        <title>A new family of high-affinity transporters for adenine, cytosine, and purine derivatives in Arabidopsis.</title>
        <authorList>
            <person name="Gillissen B."/>
            <person name="Buerkle L."/>
            <person name="Andre B."/>
            <person name="Kuehn C."/>
            <person name="Rentsch D."/>
            <person name="Brandl B."/>
            <person name="Frommer W.B."/>
        </authorList>
    </citation>
    <scope>GENE FAMILY</scope>
    <scope>NOMENCLATURE</scope>
</reference>
<keyword id="KW-0472">Membrane</keyword>
<keyword id="KW-1185">Reference proteome</keyword>
<keyword id="KW-0812">Transmembrane</keyword>
<keyword id="KW-1133">Transmembrane helix</keyword>
<keyword id="KW-0813">Transport</keyword>